<name>TNFC_MACMU</name>
<protein>
    <recommendedName>
        <fullName>Lymphotoxin-beta</fullName>
        <shortName>LT-beta</shortName>
    </recommendedName>
    <alternativeName>
        <fullName>Tumor necrosis factor C</fullName>
        <shortName>TNF-C</shortName>
    </alternativeName>
    <alternativeName>
        <fullName>Tumor necrosis factor ligand superfamily member 3</fullName>
    </alternativeName>
</protein>
<feature type="chain" id="PRO_0000185488" description="Lymphotoxin-beta">
    <location>
        <begin position="1"/>
        <end position="244"/>
    </location>
</feature>
<feature type="topological domain" description="Cytoplasmic" evidence="2">
    <location>
        <begin position="1"/>
        <end position="18"/>
    </location>
</feature>
<feature type="transmembrane region" description="Helical; Signal-anchor for type II membrane protein" evidence="2">
    <location>
        <begin position="19"/>
        <end position="48"/>
    </location>
</feature>
<feature type="topological domain" description="Extracellular" evidence="2">
    <location>
        <begin position="49"/>
        <end position="244"/>
    </location>
</feature>
<feature type="domain" description="THD" evidence="3">
    <location>
        <begin position="88"/>
        <end position="243"/>
    </location>
</feature>
<feature type="glycosylation site" description="N-linked (GlcNAc...) asparagine" evidence="2">
    <location>
        <position position="222"/>
    </location>
</feature>
<organism>
    <name type="scientific">Macaca mulatta</name>
    <name type="common">Rhesus macaque</name>
    <dbReference type="NCBI Taxonomy" id="9544"/>
    <lineage>
        <taxon>Eukaryota</taxon>
        <taxon>Metazoa</taxon>
        <taxon>Chordata</taxon>
        <taxon>Craniata</taxon>
        <taxon>Vertebrata</taxon>
        <taxon>Euteleostomi</taxon>
        <taxon>Mammalia</taxon>
        <taxon>Eutheria</taxon>
        <taxon>Euarchontoglires</taxon>
        <taxon>Primates</taxon>
        <taxon>Haplorrhini</taxon>
        <taxon>Catarrhini</taxon>
        <taxon>Cercopithecidae</taxon>
        <taxon>Cercopithecinae</taxon>
        <taxon>Macaca</taxon>
    </lineage>
</organism>
<proteinExistence type="inferred from homology"/>
<evidence type="ECO:0000250" key="1"/>
<evidence type="ECO:0000255" key="2"/>
<evidence type="ECO:0000255" key="3">
    <source>
        <dbReference type="PROSITE-ProRule" id="PRU01387"/>
    </source>
</evidence>
<evidence type="ECO:0000305" key="4"/>
<accession>Q5TM22</accession>
<sequence>MGALGLEGRGGRLQGRGSLLLAVAGATSLVTLLLAVPITVLAVLALVPQDQGGLVTDTADPGAQAQQGLGFQKLPEEEPEADLSPGLPAAHLIGAPLKGQGLGWEATKEQAFLTSGTQFSDADGLALPQDGLYYLYCLVGYRGRAPPGGAEPRGRSVTLRSSLYRAGGAYGPGTPELLLEGAETVTPVLDPAGRQGYGPLWYTSVGFGGLVQLRRGERVYVNISHPDMVDFARGKTFFGAVMVG</sequence>
<gene>
    <name type="primary">LTB</name>
    <name type="synonym">TNFC</name>
    <name type="synonym">TNFSF3</name>
</gene>
<keyword id="KW-0202">Cytokine</keyword>
<keyword id="KW-0325">Glycoprotein</keyword>
<keyword id="KW-0472">Membrane</keyword>
<keyword id="KW-1185">Reference proteome</keyword>
<keyword id="KW-0735">Signal-anchor</keyword>
<keyword id="KW-0812">Transmembrane</keyword>
<keyword id="KW-1133">Transmembrane helix</keyword>
<dbReference type="EMBL" id="AB128049">
    <property type="protein sequence ID" value="BAD69723.1"/>
    <property type="molecule type" value="Genomic_DNA"/>
</dbReference>
<dbReference type="RefSeq" id="NP_001040615.1">
    <property type="nucleotide sequence ID" value="NM_001047150.1"/>
</dbReference>
<dbReference type="SMR" id="Q5TM22"/>
<dbReference type="FunCoup" id="Q5TM22">
    <property type="interactions" value="364"/>
</dbReference>
<dbReference type="STRING" id="9544.ENSMMUP00000011600"/>
<dbReference type="GlyCosmos" id="Q5TM22">
    <property type="glycosylation" value="1 site, No reported glycans"/>
</dbReference>
<dbReference type="PaxDb" id="9544-ENSMMUP00000011600"/>
<dbReference type="GeneID" id="715518"/>
<dbReference type="KEGG" id="mcc:715518"/>
<dbReference type="CTD" id="4050"/>
<dbReference type="eggNOG" id="ENOG502SMSQ">
    <property type="taxonomic scope" value="Eukaryota"/>
</dbReference>
<dbReference type="HOGENOM" id="CLU_096531_0_0_1"/>
<dbReference type="InParanoid" id="Q5TM22"/>
<dbReference type="OrthoDB" id="9933527at2759"/>
<dbReference type="TreeFam" id="TF337780"/>
<dbReference type="Proteomes" id="UP000006718">
    <property type="component" value="Unassembled WGS sequence"/>
</dbReference>
<dbReference type="GO" id="GO:0005615">
    <property type="term" value="C:extracellular space"/>
    <property type="evidence" value="ECO:0000318"/>
    <property type="project" value="GO_Central"/>
</dbReference>
<dbReference type="GO" id="GO:0016020">
    <property type="term" value="C:membrane"/>
    <property type="evidence" value="ECO:0007669"/>
    <property type="project" value="UniProtKB-SubCell"/>
</dbReference>
<dbReference type="GO" id="GO:0005125">
    <property type="term" value="F:cytokine activity"/>
    <property type="evidence" value="ECO:0000318"/>
    <property type="project" value="GO_Central"/>
</dbReference>
<dbReference type="GO" id="GO:0005164">
    <property type="term" value="F:tumor necrosis factor receptor binding"/>
    <property type="evidence" value="ECO:0007669"/>
    <property type="project" value="InterPro"/>
</dbReference>
<dbReference type="GO" id="GO:0007166">
    <property type="term" value="P:cell surface receptor signaling pathway"/>
    <property type="evidence" value="ECO:0000318"/>
    <property type="project" value="GO_Central"/>
</dbReference>
<dbReference type="GO" id="GO:0006955">
    <property type="term" value="P:immune response"/>
    <property type="evidence" value="ECO:0007669"/>
    <property type="project" value="InterPro"/>
</dbReference>
<dbReference type="GO" id="GO:0043123">
    <property type="term" value="P:positive regulation of canonical NF-kappaB signal transduction"/>
    <property type="evidence" value="ECO:0000318"/>
    <property type="project" value="GO_Central"/>
</dbReference>
<dbReference type="GO" id="GO:2001238">
    <property type="term" value="P:positive regulation of extrinsic apoptotic signaling pathway"/>
    <property type="evidence" value="ECO:0000318"/>
    <property type="project" value="GO_Central"/>
</dbReference>
<dbReference type="CDD" id="cd00184">
    <property type="entry name" value="TNF"/>
    <property type="match status" value="1"/>
</dbReference>
<dbReference type="FunFam" id="2.60.120.40:FF:000030">
    <property type="entry name" value="Lymphotoxin-beta"/>
    <property type="match status" value="1"/>
</dbReference>
<dbReference type="Gene3D" id="2.60.120.40">
    <property type="match status" value="1"/>
</dbReference>
<dbReference type="InterPro" id="IPR006053">
    <property type="entry name" value="TNF"/>
</dbReference>
<dbReference type="InterPro" id="IPR002961">
    <property type="entry name" value="TNF_C"/>
</dbReference>
<dbReference type="InterPro" id="IPR021184">
    <property type="entry name" value="TNF_CS"/>
</dbReference>
<dbReference type="InterPro" id="IPR006052">
    <property type="entry name" value="TNF_dom"/>
</dbReference>
<dbReference type="InterPro" id="IPR008983">
    <property type="entry name" value="Tumour_necrosis_fac-like_dom"/>
</dbReference>
<dbReference type="PANTHER" id="PTHR11471:SF29">
    <property type="entry name" value="LYMPHOTOXIN-BETA"/>
    <property type="match status" value="1"/>
</dbReference>
<dbReference type="PANTHER" id="PTHR11471">
    <property type="entry name" value="TUMOR NECROSIS FACTOR FAMILY MEMBER"/>
    <property type="match status" value="1"/>
</dbReference>
<dbReference type="Pfam" id="PF00229">
    <property type="entry name" value="TNF"/>
    <property type="match status" value="1"/>
</dbReference>
<dbReference type="PRINTS" id="PR01234">
    <property type="entry name" value="TNECROSISFCT"/>
</dbReference>
<dbReference type="PRINTS" id="PR01237">
    <property type="entry name" value="TNFC"/>
</dbReference>
<dbReference type="SMART" id="SM00207">
    <property type="entry name" value="TNF"/>
    <property type="match status" value="1"/>
</dbReference>
<dbReference type="SUPFAM" id="SSF49842">
    <property type="entry name" value="TNF-like"/>
    <property type="match status" value="1"/>
</dbReference>
<dbReference type="PROSITE" id="PS00251">
    <property type="entry name" value="THD_1"/>
    <property type="match status" value="1"/>
</dbReference>
<dbReference type="PROSITE" id="PS50049">
    <property type="entry name" value="THD_2"/>
    <property type="match status" value="1"/>
</dbReference>
<comment type="function">
    <text evidence="1">Cytokine that binds to LTBR/TNFRSF3. May play a specific role in immune response regulation. Provides the membrane anchor for the attachment of the heterotrimeric complex to the cell surface (By similarity).</text>
</comment>
<comment type="subunit">
    <text evidence="1">Heterotrimer of either two LTB and one LTA subunits or (less prevalent) two LTA and one LTB subunits.</text>
</comment>
<comment type="subcellular location">
    <subcellularLocation>
        <location evidence="4">Membrane</location>
        <topology evidence="4">Single-pass type II membrane protein</topology>
    </subcellularLocation>
</comment>
<comment type="similarity">
    <text evidence="4">Belongs to the tumor necrosis factor family.</text>
</comment>
<reference key="1">
    <citation type="journal article" date="2004" name="Mol. Biol. Evol.">
        <title>Rhesus macaque class I duplicon structures, organization, and evolution within the alpha block of the major histocompatibility complex.</title>
        <authorList>
            <person name="Kulski J.K."/>
            <person name="Anzai T."/>
            <person name="Shiina T."/>
            <person name="Inoko H."/>
        </authorList>
    </citation>
    <scope>NUCLEOTIDE SEQUENCE [LARGE SCALE GENOMIC DNA]</scope>
</reference>